<gene>
    <name evidence="1" type="primary">atpB</name>
    <name type="ordered locus">GSU0334</name>
</gene>
<organism>
    <name type="scientific">Geobacter sulfurreducens (strain ATCC 51573 / DSM 12127 / PCA)</name>
    <dbReference type="NCBI Taxonomy" id="243231"/>
    <lineage>
        <taxon>Bacteria</taxon>
        <taxon>Pseudomonadati</taxon>
        <taxon>Thermodesulfobacteriota</taxon>
        <taxon>Desulfuromonadia</taxon>
        <taxon>Geobacterales</taxon>
        <taxon>Geobacteraceae</taxon>
        <taxon>Geobacter</taxon>
    </lineage>
</organism>
<keyword id="KW-0066">ATP synthesis</keyword>
<keyword id="KW-0997">Cell inner membrane</keyword>
<keyword id="KW-1003">Cell membrane</keyword>
<keyword id="KW-0138">CF(0)</keyword>
<keyword id="KW-0375">Hydrogen ion transport</keyword>
<keyword id="KW-0406">Ion transport</keyword>
<keyword id="KW-0472">Membrane</keyword>
<keyword id="KW-1185">Reference proteome</keyword>
<keyword id="KW-0812">Transmembrane</keyword>
<keyword id="KW-1133">Transmembrane helix</keyword>
<keyword id="KW-0813">Transport</keyword>
<evidence type="ECO:0000255" key="1">
    <source>
        <dbReference type="HAMAP-Rule" id="MF_01393"/>
    </source>
</evidence>
<sequence>MVHPLLFLQFFRKLLEPLHISEAGADAIAYTWLIIVCLLIVSLIATKALKAVPTGMQNFMEVVIGGIENMVEETMGEKGKPYFPLIATLALFVLVSNLIGLIPGFFPPTANLNTTAACAVIVFLSTHIVGIKKHGFHYLQHFMGPIWWLAPLMFFIEIIGHLSRPLSLSLRLFGNMNGHELVLMIFFALAPFLVPLPMMLMGVLVSFIQAFVFMLLAMIYIQGSLEEAH</sequence>
<dbReference type="EMBL" id="AE017180">
    <property type="protein sequence ID" value="AAR33667.1"/>
    <property type="molecule type" value="Genomic_DNA"/>
</dbReference>
<dbReference type="RefSeq" id="NP_951394.1">
    <property type="nucleotide sequence ID" value="NC_002939.5"/>
</dbReference>
<dbReference type="RefSeq" id="WP_010941002.1">
    <property type="nucleotide sequence ID" value="NC_002939.5"/>
</dbReference>
<dbReference type="SMR" id="Q74GB2"/>
<dbReference type="FunCoup" id="Q74GB2">
    <property type="interactions" value="360"/>
</dbReference>
<dbReference type="STRING" id="243231.GSU0334"/>
<dbReference type="EnsemblBacteria" id="AAR33667">
    <property type="protein sequence ID" value="AAR33667"/>
    <property type="gene ID" value="GSU0334"/>
</dbReference>
<dbReference type="KEGG" id="gsu:GSU0334"/>
<dbReference type="PATRIC" id="fig|243231.5.peg.331"/>
<dbReference type="eggNOG" id="COG0356">
    <property type="taxonomic scope" value="Bacteria"/>
</dbReference>
<dbReference type="HOGENOM" id="CLU_041018_2_2_7"/>
<dbReference type="InParanoid" id="Q74GB2"/>
<dbReference type="OrthoDB" id="9789241at2"/>
<dbReference type="Proteomes" id="UP000000577">
    <property type="component" value="Chromosome"/>
</dbReference>
<dbReference type="GO" id="GO:0005886">
    <property type="term" value="C:plasma membrane"/>
    <property type="evidence" value="ECO:0000318"/>
    <property type="project" value="GO_Central"/>
</dbReference>
<dbReference type="GO" id="GO:0045259">
    <property type="term" value="C:proton-transporting ATP synthase complex"/>
    <property type="evidence" value="ECO:0007669"/>
    <property type="project" value="UniProtKB-KW"/>
</dbReference>
<dbReference type="GO" id="GO:0046933">
    <property type="term" value="F:proton-transporting ATP synthase activity, rotational mechanism"/>
    <property type="evidence" value="ECO:0000318"/>
    <property type="project" value="GO_Central"/>
</dbReference>
<dbReference type="GO" id="GO:0042777">
    <property type="term" value="P:proton motive force-driven plasma membrane ATP synthesis"/>
    <property type="evidence" value="ECO:0000318"/>
    <property type="project" value="GO_Central"/>
</dbReference>
<dbReference type="CDD" id="cd00310">
    <property type="entry name" value="ATP-synt_Fo_a_6"/>
    <property type="match status" value="1"/>
</dbReference>
<dbReference type="FunFam" id="1.20.120.220:FF:000006">
    <property type="entry name" value="ATP synthase subunit a"/>
    <property type="match status" value="1"/>
</dbReference>
<dbReference type="Gene3D" id="1.20.120.220">
    <property type="entry name" value="ATP synthase, F0 complex, subunit A"/>
    <property type="match status" value="1"/>
</dbReference>
<dbReference type="HAMAP" id="MF_01393">
    <property type="entry name" value="ATP_synth_a_bact"/>
    <property type="match status" value="1"/>
</dbReference>
<dbReference type="InterPro" id="IPR045082">
    <property type="entry name" value="ATP_syn_F0_a_bact/chloroplast"/>
</dbReference>
<dbReference type="InterPro" id="IPR000568">
    <property type="entry name" value="ATP_synth_F0_asu"/>
</dbReference>
<dbReference type="InterPro" id="IPR023011">
    <property type="entry name" value="ATP_synth_F0_asu_AS"/>
</dbReference>
<dbReference type="InterPro" id="IPR035908">
    <property type="entry name" value="F0_ATP_A_sf"/>
</dbReference>
<dbReference type="NCBIfam" id="TIGR01131">
    <property type="entry name" value="ATP_synt_6_or_A"/>
    <property type="match status" value="1"/>
</dbReference>
<dbReference type="NCBIfam" id="NF004481">
    <property type="entry name" value="PRK05815.2-3"/>
    <property type="match status" value="1"/>
</dbReference>
<dbReference type="PANTHER" id="PTHR42823">
    <property type="entry name" value="ATP SYNTHASE SUBUNIT A, CHLOROPLASTIC"/>
    <property type="match status" value="1"/>
</dbReference>
<dbReference type="PANTHER" id="PTHR42823:SF3">
    <property type="entry name" value="ATP SYNTHASE SUBUNIT A, CHLOROPLASTIC"/>
    <property type="match status" value="1"/>
</dbReference>
<dbReference type="Pfam" id="PF00119">
    <property type="entry name" value="ATP-synt_A"/>
    <property type="match status" value="1"/>
</dbReference>
<dbReference type="PRINTS" id="PR00123">
    <property type="entry name" value="ATPASEA"/>
</dbReference>
<dbReference type="SUPFAM" id="SSF81336">
    <property type="entry name" value="F1F0 ATP synthase subunit A"/>
    <property type="match status" value="1"/>
</dbReference>
<dbReference type="PROSITE" id="PS00449">
    <property type="entry name" value="ATPASE_A"/>
    <property type="match status" value="1"/>
</dbReference>
<feature type="chain" id="PRO_0000362313" description="ATP synthase subunit a">
    <location>
        <begin position="1"/>
        <end position="229"/>
    </location>
</feature>
<feature type="transmembrane region" description="Helical" evidence="1">
    <location>
        <begin position="25"/>
        <end position="45"/>
    </location>
</feature>
<feature type="transmembrane region" description="Helical" evidence="1">
    <location>
        <begin position="86"/>
        <end position="106"/>
    </location>
</feature>
<feature type="transmembrane region" description="Helical" evidence="1">
    <location>
        <begin position="111"/>
        <end position="131"/>
    </location>
</feature>
<feature type="transmembrane region" description="Helical" evidence="1">
    <location>
        <begin position="142"/>
        <end position="162"/>
    </location>
</feature>
<feature type="transmembrane region" description="Helical" evidence="1">
    <location>
        <begin position="181"/>
        <end position="201"/>
    </location>
</feature>
<feature type="transmembrane region" description="Helical" evidence="1">
    <location>
        <begin position="202"/>
        <end position="222"/>
    </location>
</feature>
<protein>
    <recommendedName>
        <fullName evidence="1">ATP synthase subunit a</fullName>
    </recommendedName>
    <alternativeName>
        <fullName evidence="1">ATP synthase F0 sector subunit a</fullName>
    </alternativeName>
    <alternativeName>
        <fullName evidence="1">F-ATPase subunit 6</fullName>
    </alternativeName>
</protein>
<name>ATP6_GEOSL</name>
<accession>Q74GB2</accession>
<proteinExistence type="inferred from homology"/>
<comment type="function">
    <text evidence="1">Key component of the proton channel; it plays a direct role in the translocation of protons across the membrane.</text>
</comment>
<comment type="subunit">
    <text evidence="1">F-type ATPases have 2 components, CF(1) - the catalytic core - and CF(0) - the membrane proton channel. CF(1) has five subunits: alpha(3), beta(3), gamma(1), delta(1), epsilon(1). CF(0) has three main subunits: a(1), b(2) and c(9-12). The alpha and beta chains form an alternating ring which encloses part of the gamma chain. CF(1) is attached to CF(0) by a central stalk formed by the gamma and epsilon chains, while a peripheral stalk is formed by the delta and b chains.</text>
</comment>
<comment type="subcellular location">
    <subcellularLocation>
        <location evidence="1">Cell inner membrane</location>
        <topology evidence="1">Multi-pass membrane protein</topology>
    </subcellularLocation>
</comment>
<comment type="similarity">
    <text evidence="1">Belongs to the ATPase A chain family.</text>
</comment>
<reference key="1">
    <citation type="journal article" date="2003" name="Science">
        <title>Genome of Geobacter sulfurreducens: metal reduction in subsurface environments.</title>
        <authorList>
            <person name="Methe B.A."/>
            <person name="Nelson K.E."/>
            <person name="Eisen J.A."/>
            <person name="Paulsen I.T."/>
            <person name="Nelson W.C."/>
            <person name="Heidelberg J.F."/>
            <person name="Wu D."/>
            <person name="Wu M."/>
            <person name="Ward N.L."/>
            <person name="Beanan M.J."/>
            <person name="Dodson R.J."/>
            <person name="Madupu R."/>
            <person name="Brinkac L.M."/>
            <person name="Daugherty S.C."/>
            <person name="DeBoy R.T."/>
            <person name="Durkin A.S."/>
            <person name="Gwinn M.L."/>
            <person name="Kolonay J.F."/>
            <person name="Sullivan S.A."/>
            <person name="Haft D.H."/>
            <person name="Selengut J."/>
            <person name="Davidsen T.M."/>
            <person name="Zafar N."/>
            <person name="White O."/>
            <person name="Tran B."/>
            <person name="Romero C."/>
            <person name="Forberger H.A."/>
            <person name="Weidman J.F."/>
            <person name="Khouri H.M."/>
            <person name="Feldblyum T.V."/>
            <person name="Utterback T.R."/>
            <person name="Van Aken S.E."/>
            <person name="Lovley D.R."/>
            <person name="Fraser C.M."/>
        </authorList>
    </citation>
    <scope>NUCLEOTIDE SEQUENCE [LARGE SCALE GENOMIC DNA]</scope>
    <source>
        <strain>ATCC 51573 / DSM 12127 / PCA</strain>
    </source>
</reference>